<accession>O93449</accession>
<accession>Q91217</accession>
<proteinExistence type="evidence at transcript level"/>
<evidence type="ECO:0000250" key="1">
    <source>
        <dbReference type="UniProtKB" id="P01137"/>
    </source>
</evidence>
<evidence type="ECO:0000250" key="2">
    <source>
        <dbReference type="UniProtKB" id="P04202"/>
    </source>
</evidence>
<evidence type="ECO:0000250" key="3">
    <source>
        <dbReference type="UniProtKB" id="P07200"/>
    </source>
</evidence>
<evidence type="ECO:0000255" key="4"/>
<evidence type="ECO:0000269" key="5">
    <source>
    </source>
</evidence>
<evidence type="ECO:0000305" key="6"/>
<keyword id="KW-0165">Cleavage on pair of basic residues</keyword>
<keyword id="KW-1015">Disulfide bond</keyword>
<keyword id="KW-0272">Extracellular matrix</keyword>
<keyword id="KW-0325">Glycoprotein</keyword>
<keyword id="KW-0339">Growth factor</keyword>
<keyword id="KW-0497">Mitogen</keyword>
<keyword id="KW-0964">Secreted</keyword>
<keyword id="KW-0732">Signal</keyword>
<sequence>MRAVCLMLTALLMLEYVCRSDTMSTCKSLDLELVKRKRIEAIRGQILSKLRLPKEPEIDQEGDTEEVPASLMSIYNSTVELSEEQVHTYIPSTQDAEEEAYFAKEVHKFNMKQSENTSKHQILFNMSEMRSVLGTDRLLSQAELRLLIKNHGLLDDSEQRLELYRGVGDKARYLKSHFVSKEWANRWVSFDVTQTLNEWLQGAGEEQGFQLKLPCDCGKPMEEFRFKISGMNKLRGNTETLAMKMPSKPHILLMSLPVERHSQLSSRKKRQTTTEEICSDKSESCCVRKLYIDFRKDLGWKWIHEPTGYFANYCIGPCTYIWNTENKYSQVLALYKHHNPGASAQPCCVPQVLEPLPIIYYVGRQHKVEQLSNMIVKSCRCS</sequence>
<gene>
    <name type="primary">tgfb1</name>
</gene>
<protein>
    <recommendedName>
        <fullName>Transforming growth factor beta-1 proprotein</fullName>
    </recommendedName>
    <component>
        <recommendedName>
            <fullName>Latency-associated peptide</fullName>
            <shortName>LAP</shortName>
        </recommendedName>
    </component>
    <component>
        <recommendedName>
            <fullName>Transforming growth factor beta-1</fullName>
            <shortName>TGF-beta-1</shortName>
        </recommendedName>
    </component>
</protein>
<organism>
    <name type="scientific">Oncorhynchus mykiss</name>
    <name type="common">Rainbow trout</name>
    <name type="synonym">Salmo gairdneri</name>
    <dbReference type="NCBI Taxonomy" id="8022"/>
    <lineage>
        <taxon>Eukaryota</taxon>
        <taxon>Metazoa</taxon>
        <taxon>Chordata</taxon>
        <taxon>Craniata</taxon>
        <taxon>Vertebrata</taxon>
        <taxon>Euteleostomi</taxon>
        <taxon>Actinopterygii</taxon>
        <taxon>Neopterygii</taxon>
        <taxon>Teleostei</taxon>
        <taxon>Protacanthopterygii</taxon>
        <taxon>Salmoniformes</taxon>
        <taxon>Salmonidae</taxon>
        <taxon>Salmoninae</taxon>
        <taxon>Oncorhynchus</taxon>
    </lineage>
</organism>
<feature type="signal peptide" evidence="4">
    <location>
        <begin position="1"/>
        <end position="20"/>
    </location>
</feature>
<feature type="chain" id="PRO_0000445551" description="Latency-associated peptide" evidence="1">
    <location>
        <begin position="21"/>
        <end position="271"/>
    </location>
</feature>
<feature type="chain" id="PRO_0000033781" description="Transforming growth factor beta-1" evidence="1">
    <location>
        <begin position="272"/>
        <end position="382"/>
    </location>
</feature>
<feature type="region of interest" description="Straightjacket domain" evidence="3">
    <location>
        <begin position="23"/>
        <end position="68"/>
    </location>
</feature>
<feature type="region of interest" description="Arm domain" evidence="3">
    <location>
        <begin position="69"/>
        <end position="264"/>
    </location>
</feature>
<feature type="region of interest" description="Bowtie tail" evidence="1">
    <location>
        <begin position="218"/>
        <end position="243"/>
    </location>
</feature>
<feature type="short sequence motif" description="Cell attachment site" evidence="4">
    <location>
        <begin position="235"/>
        <end position="237"/>
    </location>
</feature>
<feature type="glycosylation site" description="N-linked (GlcNAc...) asparagine" evidence="4">
    <location>
        <position position="76"/>
    </location>
</feature>
<feature type="glycosylation site" description="N-linked (GlcNAc...) asparagine" evidence="4">
    <location>
        <position position="116"/>
    </location>
</feature>
<feature type="glycosylation site" description="N-linked (GlcNAc...) asparagine" evidence="4">
    <location>
        <position position="125"/>
    </location>
</feature>
<feature type="disulfide bond" description="Interchain (with C-? in LTBP1 TB3 domain); in inactive form" evidence="3">
    <location>
        <position position="26"/>
    </location>
</feature>
<feature type="disulfide bond" description="Interchain (with C-217)" evidence="1">
    <location>
        <position position="215"/>
    </location>
</feature>
<feature type="disulfide bond" description="Interchain (with C-215)" evidence="1">
    <location>
        <position position="217"/>
    </location>
</feature>
<feature type="disulfide bond" evidence="1">
    <location>
        <begin position="278"/>
        <end position="286"/>
    </location>
</feature>
<feature type="disulfide bond" evidence="1">
    <location>
        <begin position="285"/>
        <end position="348"/>
    </location>
</feature>
<feature type="disulfide bond" evidence="1">
    <location>
        <begin position="314"/>
        <end position="379"/>
    </location>
</feature>
<feature type="disulfide bond" evidence="1">
    <location>
        <begin position="318"/>
        <end position="381"/>
    </location>
</feature>
<feature type="disulfide bond" description="Interchain" evidence="1">
    <location>
        <position position="347"/>
    </location>
</feature>
<feature type="sequence conflict" description="In Ref. 2; CAA67685." evidence="6" ref="2">
    <original>N</original>
    <variation>D</variation>
    <location>
        <position position="237"/>
    </location>
</feature>
<feature type="sequence conflict" description="In Ref. 2; CAA67685." evidence="6" ref="2">
    <original>Q</original>
    <variation>H</variation>
    <location>
        <position position="345"/>
    </location>
</feature>
<feature type="sequence conflict" description="In Ref. 2; CAA67685." evidence="6" ref="2">
    <original>LS</original>
    <variation>VP</variation>
    <location>
        <begin position="371"/>
        <end position="372"/>
    </location>
</feature>
<feature type="sequence conflict" description="In Ref. 2; CAA67685." evidence="6" ref="2">
    <original>K</original>
    <variation>M</variation>
    <location>
        <position position="377"/>
    </location>
</feature>
<dbReference type="EMBL" id="AJ007836">
    <property type="protein sequence ID" value="CAA07707.1"/>
    <property type="molecule type" value="Genomic_DNA"/>
</dbReference>
<dbReference type="EMBL" id="X99303">
    <property type="protein sequence ID" value="CAA67685.1"/>
    <property type="molecule type" value="mRNA"/>
</dbReference>
<dbReference type="SMR" id="O93449"/>
<dbReference type="GlyCosmos" id="O93449">
    <property type="glycosylation" value="3 sites, No reported glycans"/>
</dbReference>
<dbReference type="Proteomes" id="UP000694395">
    <property type="component" value="Unplaced"/>
</dbReference>
<dbReference type="GO" id="GO:0005615">
    <property type="term" value="C:extracellular space"/>
    <property type="evidence" value="ECO:0007669"/>
    <property type="project" value="InterPro"/>
</dbReference>
<dbReference type="GO" id="GO:0005125">
    <property type="term" value="F:cytokine activity"/>
    <property type="evidence" value="ECO:0007669"/>
    <property type="project" value="TreeGrafter"/>
</dbReference>
<dbReference type="GO" id="GO:0008083">
    <property type="term" value="F:growth factor activity"/>
    <property type="evidence" value="ECO:0007669"/>
    <property type="project" value="UniProtKB-KW"/>
</dbReference>
<dbReference type="GO" id="GO:0005160">
    <property type="term" value="F:transforming growth factor beta receptor binding"/>
    <property type="evidence" value="ECO:0007669"/>
    <property type="project" value="InterPro"/>
</dbReference>
<dbReference type="GO" id="GO:0051781">
    <property type="term" value="P:positive regulation of cell division"/>
    <property type="evidence" value="ECO:0007669"/>
    <property type="project" value="UniProtKB-KW"/>
</dbReference>
<dbReference type="GO" id="GO:0042127">
    <property type="term" value="P:regulation of cell population proliferation"/>
    <property type="evidence" value="ECO:0007669"/>
    <property type="project" value="TreeGrafter"/>
</dbReference>
<dbReference type="GO" id="GO:0007179">
    <property type="term" value="P:transforming growth factor beta receptor signaling pathway"/>
    <property type="evidence" value="ECO:0007669"/>
    <property type="project" value="TreeGrafter"/>
</dbReference>
<dbReference type="CDD" id="cd19384">
    <property type="entry name" value="TGF_beta_TGFB1"/>
    <property type="match status" value="1"/>
</dbReference>
<dbReference type="FunFam" id="2.10.90.10:FF:000004">
    <property type="entry name" value="Transforming growth factor beta"/>
    <property type="match status" value="1"/>
</dbReference>
<dbReference type="Gene3D" id="2.60.120.970">
    <property type="match status" value="1"/>
</dbReference>
<dbReference type="Gene3D" id="2.10.90.10">
    <property type="entry name" value="Cystine-knot cytokines"/>
    <property type="match status" value="1"/>
</dbReference>
<dbReference type="InterPro" id="IPR029034">
    <property type="entry name" value="Cystine-knot_cytokine"/>
</dbReference>
<dbReference type="InterPro" id="IPR001839">
    <property type="entry name" value="TGF-b_C"/>
</dbReference>
<dbReference type="InterPro" id="IPR001111">
    <property type="entry name" value="TGF-b_propeptide"/>
</dbReference>
<dbReference type="InterPro" id="IPR016319">
    <property type="entry name" value="TGF-beta"/>
</dbReference>
<dbReference type="InterPro" id="IPR015615">
    <property type="entry name" value="TGF-beta-rel"/>
</dbReference>
<dbReference type="InterPro" id="IPR003939">
    <property type="entry name" value="TGFb1"/>
</dbReference>
<dbReference type="InterPro" id="IPR017948">
    <property type="entry name" value="TGFb_CS"/>
</dbReference>
<dbReference type="PANTHER" id="PTHR11848">
    <property type="entry name" value="TGF-BETA FAMILY"/>
    <property type="match status" value="1"/>
</dbReference>
<dbReference type="PANTHER" id="PTHR11848:SF125">
    <property type="entry name" value="TRANSFORMING GROWTH FACTOR BETA-1 PROPROTEIN"/>
    <property type="match status" value="1"/>
</dbReference>
<dbReference type="Pfam" id="PF00019">
    <property type="entry name" value="TGF_beta"/>
    <property type="match status" value="1"/>
</dbReference>
<dbReference type="Pfam" id="PF00688">
    <property type="entry name" value="TGFb_propeptide"/>
    <property type="match status" value="1"/>
</dbReference>
<dbReference type="PIRSF" id="PIRSF001787">
    <property type="entry name" value="TGF-beta"/>
    <property type="match status" value="1"/>
</dbReference>
<dbReference type="PRINTS" id="PR01423">
    <property type="entry name" value="TGFBETA"/>
</dbReference>
<dbReference type="PRINTS" id="PR01424">
    <property type="entry name" value="TGFBETA1"/>
</dbReference>
<dbReference type="SMART" id="SM00204">
    <property type="entry name" value="TGFB"/>
    <property type="match status" value="1"/>
</dbReference>
<dbReference type="SUPFAM" id="SSF57501">
    <property type="entry name" value="Cystine-knot cytokines"/>
    <property type="match status" value="1"/>
</dbReference>
<dbReference type="PROSITE" id="PS00250">
    <property type="entry name" value="TGF_BETA_1"/>
    <property type="match status" value="1"/>
</dbReference>
<dbReference type="PROSITE" id="PS51362">
    <property type="entry name" value="TGF_BETA_2"/>
    <property type="match status" value="1"/>
</dbReference>
<comment type="function">
    <text evidence="1">Transforming growth factor beta-1 proprotein: Precursor of the Latency-associated peptide (LAP) and Transforming growth factor beta-1 (TGF-beta-1) chains, which constitute the regulatory and active subunit of TGF-beta-1, respectively.</text>
</comment>
<comment type="function">
    <molecule>Latency-associated peptide</molecule>
    <text evidence="1">Required to maintain the Transforming growth factor beta-1 (TGF-beta-1) chain in a latent state during storage in extracellular matrix. Associates non-covalently with TGF-beta-1 and regulates its activation via interaction with 'milieu molecules', such as LTBP1, LRRC32/GARP and LRRC33/NRROS, that control activation of TGF-beta-1. Interaction with integrins (ITGAV:ITGB6 or ITGAV:ITGB8) results in distortion of the Latency-associated peptide chain and subsequent release of the active TGF-beta-1.</text>
</comment>
<comment type="function">
    <text evidence="1 2">Transforming growth factor beta-1: Multifunctional protein that regulates the growth and differentiation of various cell types and is involved in various processes, such as normal development, immune function, microglia function and responses to neurodegeneration (By similarity). Activation into mature form follows different steps: following cleavage of the proprotein in the Golgi apparatus, Latency-associated peptide (LAP) and Transforming growth factor beta-1 (TGF-beta-1) chains remain non-covalently linked rendering TGF-beta-1 inactive during storage in extracellular matrix. At the same time, LAP chain interacts with 'milieu molecules', such as ltbp1, lrrc32/garp and lrrc33/nrros that control activation of TGF-beta-1 and maintain it in a latent state during storage in extracellular milieus. TGF-beta-1 is released from LAP by integrins (ITGAV:ITGB6 or ITGAV:ITGB8): integrin-binding to LAP stabilizes an alternative conformation of the LAP bowtie tail and results in distortion of the LAP chain and subsequent release of the active TGF-beta-1. Once activated following release of LAP, TGF-beta-1 acts by binding to TGF-beta receptors (tgfbr1 and tgfbr2), which transduce signal (By similarity). While expressed by many cells types, TGF-beta-1 only has a very localized range of action within cell environment thanks to fine regulation of its activation by Latency-associated peptide chain (LAP) and 'milieu molecules'. Plays an important role in bone remodeling: acts as a potent stimulator of osteoblastic bone formation. Can promote either T-helper 17 cells (Th17) or regulatory T-cells (Treg) lineage differentiation in a concentration-dependent manner (By similarity). Can induce epithelial-to-mesenchymal transition (EMT) and cell migration in various cell types (By similarity).</text>
</comment>
<comment type="subunit">
    <text evidence="1">Latency-associated peptide: Homodimer; disulfide-linked. Latency-associated peptide: Interacts with Transforming growth factor beta-1 (TGF-beta-1) chain; interaction is non-covalent and maintains (TGF-beta-1) in a latent state; each Latency-associated peptide (LAP) monomer interacts with TGF-beta-1 in the other monomer. Transforming growth factor beta-1: Homodimer; disulfide-linked. Transforming growth factor beta-1: Interacts with TGF-beta receptors (tgfbr1 and tgfbr2), leading to signal transduction. Interacts with EFEMP2 (By similarity).</text>
</comment>
<comment type="subcellular location">
    <molecule>Latency-associated peptide</molecule>
    <subcellularLocation>
        <location evidence="1">Secreted</location>
        <location evidence="1">Extracellular space</location>
        <location evidence="1">Extracellular matrix</location>
    </subcellularLocation>
</comment>
<comment type="subcellular location">
    <molecule>Transforming growth factor beta-1</molecule>
    <subcellularLocation>
        <location evidence="1">Secreted</location>
    </subcellularLocation>
</comment>
<comment type="tissue specificity">
    <text evidence="5">Expressed in blood leukocytes, kidney macrophages, brain, gill and spleen but not in liver.</text>
</comment>
<comment type="domain">
    <molecule>Latency-associated peptide</molecule>
    <text evidence="3">The 'straitjacket' and 'arm' domains encircle the Transforming growth factor beta-1 (TGF-beta-1) monomers and are fastened together by strong bonding between Lys-54 and Tyr-101/Phe-102.</text>
</comment>
<comment type="domain">
    <molecule>Latency-associated peptide</molecule>
    <text evidence="1">The cell attachment site motif mediates binding to integrins (ITGAV:ITGB6 or ITGAV:ITGB8). The motif locates to a long loop in the arm domain called the bowtie tail. Integrin-binding stabilizes an alternative conformation of the bowtie tail. Activation by integrin requires force application by the actin cytoskeleton, which is resisted by the 'milieu molecules' (such as ltbp1, lrrc32/garp and/or lrrc33/nrros), resulting in distortion of the prodomain and release of the active TGF-beta-1.</text>
</comment>
<comment type="PTM">
    <text evidence="1">Transforming growth factor beta-1 proprotein: The precursor proprotein is cleaved in the Golgi apparatus to form Transforming growth factor beta-1 (TGF-beta-1) and Latency-associated peptide (LAP) chains, which remain non-covalently linked, rendering TGF-beta-1 inactive.</text>
</comment>
<comment type="similarity">
    <text evidence="6">Belongs to the TGF-beta family.</text>
</comment>
<reference key="1">
    <citation type="journal article" date="1999" name="Dev. Comp. Immunol.">
        <title>Genomic organisation of rainbow trout, Oncorhynchus mykiss TGF-beta.</title>
        <authorList>
            <person name="Daniels G.D."/>
            <person name="Secombes C.J."/>
        </authorList>
    </citation>
    <scope>NUCLEOTIDE SEQUENCE [GENOMIC DNA]</scope>
    <source>
        <tissue>Leukocyte</tissue>
    </source>
</reference>
<reference key="2">
    <citation type="journal article" date="1998" name="Cytokine">
        <title>Isolation of the first piscine transforming growth factor beta gene: analysis reveals tissue specific expression and a potential regulatory sequence in rainbow trout (Oncorhynchus mykiss).</title>
        <authorList>
            <person name="Hardie L.J."/>
            <person name="Laing K.J."/>
            <person name="Daniels G.D."/>
            <person name="Grabowski P.S."/>
            <person name="Cunningham C."/>
            <person name="Secombes C.J."/>
        </authorList>
    </citation>
    <scope>NUCLEOTIDE SEQUENCE</scope>
    <scope>TISSUE SPECIFICITY</scope>
    <source>
        <tissue>Leukocyte</tissue>
    </source>
</reference>
<name>TGFB1_ONCMY</name>